<gene>
    <name evidence="1" type="primary">atpA</name>
    <name type="ordered locus">MMP1044</name>
</gene>
<evidence type="ECO:0000255" key="1">
    <source>
        <dbReference type="HAMAP-Rule" id="MF_00309"/>
    </source>
</evidence>
<accession>Q6LYE7</accession>
<feature type="chain" id="PRO_0000322473" description="A-type ATP synthase subunit A">
    <location>
        <begin position="1"/>
        <end position="586"/>
    </location>
</feature>
<feature type="binding site" evidence="1">
    <location>
        <begin position="232"/>
        <end position="239"/>
    </location>
    <ligand>
        <name>ATP</name>
        <dbReference type="ChEBI" id="CHEBI:30616"/>
    </ligand>
</feature>
<organism>
    <name type="scientific">Methanococcus maripaludis (strain DSM 14266 / JCM 13030 / NBRC 101832 / S2 / LL)</name>
    <dbReference type="NCBI Taxonomy" id="267377"/>
    <lineage>
        <taxon>Archaea</taxon>
        <taxon>Methanobacteriati</taxon>
        <taxon>Methanobacteriota</taxon>
        <taxon>Methanomada group</taxon>
        <taxon>Methanococci</taxon>
        <taxon>Methanococcales</taxon>
        <taxon>Methanococcaceae</taxon>
        <taxon>Methanococcus</taxon>
    </lineage>
</organism>
<sequence length="586" mass="64194">MVVGKIIKISGPVVVAEGMKGSQMFEVVKVGNEGLTGEIIQLTEDEAIIQVYEETAGIKPGEGVEGTGAPLSVELGPGMLKAMYDGIQRPLNEIENATDSIYIPRGVSVPSISREIKWDFEPTAAAGDEVITGDVIGTVQETASIVHKIMIPFGVSGKIKEIKAGSFTVEETVAVVETAEGEKEIMMMQKWPVRKPRPSKGKQAPVIPLITGQRVEDTFFGLAKGGASAIPGPFGSGKTVTQHQLAKWSDVDVVVYIGCGERGNEMTEVIEEFPHLDDIKTGNKLMDRTVLIANTSNMPVAAREASVYTGITIAEYFRDQGLGVLLTADSTSRWAEAMREISGRLEEMPGEEGYPAYLSSKLAQFYERAGRVECLGSENKQGFVCIVGAVSPPGGDFSEPVTSNTLRIVKVFWALDANLARRRHFPAINWLTSYSLYIDDIAGWWQQNTAADWRSLRDEAMSLLQKEAELQEIVQLVGPDALPDRERVILEIARMLREDFLQQDAYHEVDSYCSPLKQYNMLKIIMTFYKKGLDAVAKGADPAGISAVTVKGDIARMKYLTDDEFINTKVPEIINKMESELGALIK</sequence>
<name>AATA_METMP</name>
<comment type="function">
    <text evidence="1">Component of the A-type ATP synthase that produces ATP from ADP in the presence of a proton gradient across the membrane. The A chain is the catalytic subunit.</text>
</comment>
<comment type="catalytic activity">
    <reaction evidence="1">
        <text>ATP + H2O + 4 H(+)(in) = ADP + phosphate + 5 H(+)(out)</text>
        <dbReference type="Rhea" id="RHEA:57720"/>
        <dbReference type="ChEBI" id="CHEBI:15377"/>
        <dbReference type="ChEBI" id="CHEBI:15378"/>
        <dbReference type="ChEBI" id="CHEBI:30616"/>
        <dbReference type="ChEBI" id="CHEBI:43474"/>
        <dbReference type="ChEBI" id="CHEBI:456216"/>
        <dbReference type="EC" id="7.1.2.2"/>
    </reaction>
</comment>
<comment type="subunit">
    <text evidence="1">Has multiple subunits with at least A(3), B(3), C, D, E, F, H, I and proteolipid K(x).</text>
</comment>
<comment type="subcellular location">
    <subcellularLocation>
        <location evidence="1">Cell membrane</location>
        <topology evidence="1">Peripheral membrane protein</topology>
    </subcellularLocation>
</comment>
<comment type="similarity">
    <text evidence="1">Belongs to the ATPase alpha/beta chains family.</text>
</comment>
<keyword id="KW-0066">ATP synthesis</keyword>
<keyword id="KW-0067">ATP-binding</keyword>
<keyword id="KW-1003">Cell membrane</keyword>
<keyword id="KW-0375">Hydrogen ion transport</keyword>
<keyword id="KW-0406">Ion transport</keyword>
<keyword id="KW-0472">Membrane</keyword>
<keyword id="KW-0547">Nucleotide-binding</keyword>
<keyword id="KW-1185">Reference proteome</keyword>
<keyword id="KW-1278">Translocase</keyword>
<keyword id="KW-0813">Transport</keyword>
<dbReference type="EC" id="7.1.2.2" evidence="1"/>
<dbReference type="EMBL" id="BX950229">
    <property type="protein sequence ID" value="CAF30600.1"/>
    <property type="molecule type" value="Genomic_DNA"/>
</dbReference>
<dbReference type="RefSeq" id="WP_011170988.1">
    <property type="nucleotide sequence ID" value="NC_005791.1"/>
</dbReference>
<dbReference type="SMR" id="Q6LYE7"/>
<dbReference type="STRING" id="267377.MMP1044"/>
<dbReference type="EnsemblBacteria" id="CAF30600">
    <property type="protein sequence ID" value="CAF30600"/>
    <property type="gene ID" value="MMP1044"/>
</dbReference>
<dbReference type="GeneID" id="10982623"/>
<dbReference type="KEGG" id="mmp:MMP1044"/>
<dbReference type="PATRIC" id="fig|267377.15.peg.1076"/>
<dbReference type="eggNOG" id="arCOG00868">
    <property type="taxonomic scope" value="Archaea"/>
</dbReference>
<dbReference type="HOGENOM" id="CLU_008162_3_1_2"/>
<dbReference type="OrthoDB" id="115235at2157"/>
<dbReference type="Proteomes" id="UP000000590">
    <property type="component" value="Chromosome"/>
</dbReference>
<dbReference type="GO" id="GO:0005886">
    <property type="term" value="C:plasma membrane"/>
    <property type="evidence" value="ECO:0007669"/>
    <property type="project" value="UniProtKB-SubCell"/>
</dbReference>
<dbReference type="GO" id="GO:0033178">
    <property type="term" value="C:proton-transporting two-sector ATPase complex, catalytic domain"/>
    <property type="evidence" value="ECO:0007669"/>
    <property type="project" value="InterPro"/>
</dbReference>
<dbReference type="GO" id="GO:0005524">
    <property type="term" value="F:ATP binding"/>
    <property type="evidence" value="ECO:0007669"/>
    <property type="project" value="UniProtKB-UniRule"/>
</dbReference>
<dbReference type="GO" id="GO:0046933">
    <property type="term" value="F:proton-transporting ATP synthase activity, rotational mechanism"/>
    <property type="evidence" value="ECO:0007669"/>
    <property type="project" value="UniProtKB-UniRule"/>
</dbReference>
<dbReference type="GO" id="GO:0046961">
    <property type="term" value="F:proton-transporting ATPase activity, rotational mechanism"/>
    <property type="evidence" value="ECO:0007669"/>
    <property type="project" value="InterPro"/>
</dbReference>
<dbReference type="GO" id="GO:0042777">
    <property type="term" value="P:proton motive force-driven plasma membrane ATP synthesis"/>
    <property type="evidence" value="ECO:0007669"/>
    <property type="project" value="UniProtKB-UniRule"/>
</dbReference>
<dbReference type="CDD" id="cd18111">
    <property type="entry name" value="ATP-synt_V_A-type_alpha_C"/>
    <property type="match status" value="1"/>
</dbReference>
<dbReference type="CDD" id="cd18119">
    <property type="entry name" value="ATP-synt_V_A-type_alpha_N"/>
    <property type="match status" value="1"/>
</dbReference>
<dbReference type="CDD" id="cd01134">
    <property type="entry name" value="V_A-ATPase_A"/>
    <property type="match status" value="1"/>
</dbReference>
<dbReference type="FunFam" id="1.10.1140.10:FF:000002">
    <property type="entry name" value="V-type proton ATPase catalytic subunit A"/>
    <property type="match status" value="1"/>
</dbReference>
<dbReference type="FunFam" id="2.40.30.20:FF:000002">
    <property type="entry name" value="V-type proton ATPase catalytic subunit A"/>
    <property type="match status" value="1"/>
</dbReference>
<dbReference type="FunFam" id="2.40.50.100:FF:000008">
    <property type="entry name" value="V-type proton ATPase catalytic subunit A"/>
    <property type="match status" value="1"/>
</dbReference>
<dbReference type="Gene3D" id="2.40.30.20">
    <property type="match status" value="1"/>
</dbReference>
<dbReference type="Gene3D" id="2.40.50.100">
    <property type="match status" value="1"/>
</dbReference>
<dbReference type="Gene3D" id="1.10.1140.10">
    <property type="entry name" value="Bovine Mitochondrial F1-atpase, Atp Synthase Beta Chain, Chain D, domain 3"/>
    <property type="match status" value="1"/>
</dbReference>
<dbReference type="Gene3D" id="3.40.50.300">
    <property type="entry name" value="P-loop containing nucleotide triphosphate hydrolases"/>
    <property type="match status" value="1"/>
</dbReference>
<dbReference type="HAMAP" id="MF_00309">
    <property type="entry name" value="ATP_synth_A_arch"/>
    <property type="match status" value="1"/>
</dbReference>
<dbReference type="InterPro" id="IPR055190">
    <property type="entry name" value="ATP-synt_VA_C"/>
</dbReference>
<dbReference type="InterPro" id="IPR031686">
    <property type="entry name" value="ATP-synth_a_Xtn"/>
</dbReference>
<dbReference type="InterPro" id="IPR023366">
    <property type="entry name" value="ATP_synth_asu-like_sf"/>
</dbReference>
<dbReference type="InterPro" id="IPR005726">
    <property type="entry name" value="ATP_synth_asu_arc"/>
</dbReference>
<dbReference type="InterPro" id="IPR020003">
    <property type="entry name" value="ATPase_a/bsu_AS"/>
</dbReference>
<dbReference type="InterPro" id="IPR004100">
    <property type="entry name" value="ATPase_F1/V1/A1_a/bsu_N"/>
</dbReference>
<dbReference type="InterPro" id="IPR036121">
    <property type="entry name" value="ATPase_F1/V1/A1_a/bsu_N_sf"/>
</dbReference>
<dbReference type="InterPro" id="IPR000194">
    <property type="entry name" value="ATPase_F1/V1/A1_a/bsu_nucl-bd"/>
</dbReference>
<dbReference type="InterPro" id="IPR024034">
    <property type="entry name" value="ATPase_F1/V1_b/a_C"/>
</dbReference>
<dbReference type="InterPro" id="IPR027417">
    <property type="entry name" value="P-loop_NTPase"/>
</dbReference>
<dbReference type="InterPro" id="IPR022878">
    <property type="entry name" value="V-ATPase_asu"/>
</dbReference>
<dbReference type="NCBIfam" id="TIGR01043">
    <property type="entry name" value="ATP_syn_A_arch"/>
    <property type="match status" value="1"/>
</dbReference>
<dbReference type="NCBIfam" id="NF003220">
    <property type="entry name" value="PRK04192.1"/>
    <property type="match status" value="1"/>
</dbReference>
<dbReference type="PANTHER" id="PTHR43607:SF1">
    <property type="entry name" value="H(+)-TRANSPORTING TWO-SECTOR ATPASE"/>
    <property type="match status" value="1"/>
</dbReference>
<dbReference type="PANTHER" id="PTHR43607">
    <property type="entry name" value="V-TYPE PROTON ATPASE CATALYTIC SUBUNIT A"/>
    <property type="match status" value="1"/>
</dbReference>
<dbReference type="Pfam" id="PF00006">
    <property type="entry name" value="ATP-synt_ab"/>
    <property type="match status" value="1"/>
</dbReference>
<dbReference type="Pfam" id="PF02874">
    <property type="entry name" value="ATP-synt_ab_N"/>
    <property type="match status" value="1"/>
</dbReference>
<dbReference type="Pfam" id="PF16886">
    <property type="entry name" value="ATP-synt_ab_Xtn"/>
    <property type="match status" value="1"/>
</dbReference>
<dbReference type="Pfam" id="PF22919">
    <property type="entry name" value="ATP-synt_VA_C"/>
    <property type="match status" value="1"/>
</dbReference>
<dbReference type="SUPFAM" id="SSF47917">
    <property type="entry name" value="C-terminal domain of alpha and beta subunits of F1 ATP synthase"/>
    <property type="match status" value="1"/>
</dbReference>
<dbReference type="SUPFAM" id="SSF50615">
    <property type="entry name" value="N-terminal domain of alpha and beta subunits of F1 ATP synthase"/>
    <property type="match status" value="1"/>
</dbReference>
<dbReference type="SUPFAM" id="SSF52540">
    <property type="entry name" value="P-loop containing nucleoside triphosphate hydrolases"/>
    <property type="match status" value="1"/>
</dbReference>
<dbReference type="PROSITE" id="PS00152">
    <property type="entry name" value="ATPASE_ALPHA_BETA"/>
    <property type="match status" value="1"/>
</dbReference>
<proteinExistence type="inferred from homology"/>
<reference key="1">
    <citation type="journal article" date="2004" name="J. Bacteriol.">
        <title>Complete genome sequence of the genetically tractable hydrogenotrophic methanogen Methanococcus maripaludis.</title>
        <authorList>
            <person name="Hendrickson E.L."/>
            <person name="Kaul R."/>
            <person name="Zhou Y."/>
            <person name="Bovee D."/>
            <person name="Chapman P."/>
            <person name="Chung J."/>
            <person name="Conway de Macario E."/>
            <person name="Dodsworth J.A."/>
            <person name="Gillett W."/>
            <person name="Graham D.E."/>
            <person name="Hackett M."/>
            <person name="Haydock A.K."/>
            <person name="Kang A."/>
            <person name="Land M.L."/>
            <person name="Levy R."/>
            <person name="Lie T.J."/>
            <person name="Major T.A."/>
            <person name="Moore B.C."/>
            <person name="Porat I."/>
            <person name="Palmeiri A."/>
            <person name="Rouse G."/>
            <person name="Saenphimmachak C."/>
            <person name="Soell D."/>
            <person name="Van Dien S."/>
            <person name="Wang T."/>
            <person name="Whitman W.B."/>
            <person name="Xia Q."/>
            <person name="Zhang Y."/>
            <person name="Larimer F.W."/>
            <person name="Olson M.V."/>
            <person name="Leigh J.A."/>
        </authorList>
    </citation>
    <scope>NUCLEOTIDE SEQUENCE [LARGE SCALE GENOMIC DNA]</scope>
    <source>
        <strain>DSM 14266 / JCM 13030 / NBRC 101832 / S2 / LL</strain>
    </source>
</reference>
<protein>
    <recommendedName>
        <fullName evidence="1">A-type ATP synthase subunit A</fullName>
        <ecNumber evidence="1">7.1.2.2</ecNumber>
    </recommendedName>
</protein>